<dbReference type="EC" id="2.5.1.75" evidence="1"/>
<dbReference type="EMBL" id="CP000449">
    <property type="protein sequence ID" value="ABI66313.1"/>
    <property type="molecule type" value="Genomic_DNA"/>
</dbReference>
<dbReference type="RefSeq" id="WP_011643958.1">
    <property type="nucleotide sequence ID" value="NC_008347.1"/>
</dbReference>
<dbReference type="SMR" id="Q0AN24"/>
<dbReference type="STRING" id="394221.Mmar10_2021"/>
<dbReference type="KEGG" id="mmr:Mmar10_2021"/>
<dbReference type="eggNOG" id="COG0324">
    <property type="taxonomic scope" value="Bacteria"/>
</dbReference>
<dbReference type="HOGENOM" id="CLU_032616_0_1_5"/>
<dbReference type="OrthoDB" id="9776390at2"/>
<dbReference type="Proteomes" id="UP000001964">
    <property type="component" value="Chromosome"/>
</dbReference>
<dbReference type="GO" id="GO:0005524">
    <property type="term" value="F:ATP binding"/>
    <property type="evidence" value="ECO:0007669"/>
    <property type="project" value="UniProtKB-UniRule"/>
</dbReference>
<dbReference type="GO" id="GO:0052381">
    <property type="term" value="F:tRNA dimethylallyltransferase activity"/>
    <property type="evidence" value="ECO:0007669"/>
    <property type="project" value="UniProtKB-UniRule"/>
</dbReference>
<dbReference type="GO" id="GO:0006400">
    <property type="term" value="P:tRNA modification"/>
    <property type="evidence" value="ECO:0007669"/>
    <property type="project" value="TreeGrafter"/>
</dbReference>
<dbReference type="Gene3D" id="1.10.20.140">
    <property type="match status" value="1"/>
</dbReference>
<dbReference type="Gene3D" id="3.40.50.300">
    <property type="entry name" value="P-loop containing nucleotide triphosphate hydrolases"/>
    <property type="match status" value="1"/>
</dbReference>
<dbReference type="HAMAP" id="MF_00185">
    <property type="entry name" value="IPP_trans"/>
    <property type="match status" value="1"/>
</dbReference>
<dbReference type="InterPro" id="IPR039657">
    <property type="entry name" value="Dimethylallyltransferase"/>
</dbReference>
<dbReference type="InterPro" id="IPR018022">
    <property type="entry name" value="IPT"/>
</dbReference>
<dbReference type="InterPro" id="IPR027417">
    <property type="entry name" value="P-loop_NTPase"/>
</dbReference>
<dbReference type="NCBIfam" id="TIGR00174">
    <property type="entry name" value="miaA"/>
    <property type="match status" value="1"/>
</dbReference>
<dbReference type="PANTHER" id="PTHR11088">
    <property type="entry name" value="TRNA DIMETHYLALLYLTRANSFERASE"/>
    <property type="match status" value="1"/>
</dbReference>
<dbReference type="PANTHER" id="PTHR11088:SF60">
    <property type="entry name" value="TRNA DIMETHYLALLYLTRANSFERASE"/>
    <property type="match status" value="1"/>
</dbReference>
<dbReference type="Pfam" id="PF01715">
    <property type="entry name" value="IPPT"/>
    <property type="match status" value="1"/>
</dbReference>
<dbReference type="SUPFAM" id="SSF52540">
    <property type="entry name" value="P-loop containing nucleoside triphosphate hydrolases"/>
    <property type="match status" value="2"/>
</dbReference>
<proteinExistence type="inferred from homology"/>
<reference key="1">
    <citation type="submission" date="2006-08" db="EMBL/GenBank/DDBJ databases">
        <title>Complete sequence of Maricaulis maris MCS10.</title>
        <authorList>
            <consortium name="US DOE Joint Genome Institute"/>
            <person name="Copeland A."/>
            <person name="Lucas S."/>
            <person name="Lapidus A."/>
            <person name="Barry K."/>
            <person name="Detter J.C."/>
            <person name="Glavina del Rio T."/>
            <person name="Hammon N."/>
            <person name="Israni S."/>
            <person name="Dalin E."/>
            <person name="Tice H."/>
            <person name="Pitluck S."/>
            <person name="Saunders E."/>
            <person name="Brettin T."/>
            <person name="Bruce D."/>
            <person name="Han C."/>
            <person name="Tapia R."/>
            <person name="Gilna P."/>
            <person name="Schmutz J."/>
            <person name="Larimer F."/>
            <person name="Land M."/>
            <person name="Hauser L."/>
            <person name="Kyrpides N."/>
            <person name="Mikhailova N."/>
            <person name="Viollier P."/>
            <person name="Stephens C."/>
            <person name="Richardson P."/>
        </authorList>
    </citation>
    <scope>NUCLEOTIDE SEQUENCE [LARGE SCALE GENOMIC DNA]</scope>
    <source>
        <strain>MCS10</strain>
    </source>
</reference>
<keyword id="KW-0067">ATP-binding</keyword>
<keyword id="KW-0460">Magnesium</keyword>
<keyword id="KW-0547">Nucleotide-binding</keyword>
<keyword id="KW-1185">Reference proteome</keyword>
<keyword id="KW-0808">Transferase</keyword>
<keyword id="KW-0819">tRNA processing</keyword>
<name>MIAA_MARMM</name>
<evidence type="ECO:0000255" key="1">
    <source>
        <dbReference type="HAMAP-Rule" id="MF_00185"/>
    </source>
</evidence>
<accession>Q0AN24</accession>
<gene>
    <name evidence="1" type="primary">miaA</name>
    <name type="ordered locus">Mmar10_2021</name>
</gene>
<protein>
    <recommendedName>
        <fullName evidence="1">tRNA dimethylallyltransferase</fullName>
        <ecNumber evidence="1">2.5.1.75</ecNumber>
    </recommendedName>
    <alternativeName>
        <fullName evidence="1">Dimethylallyl diphosphate:tRNA dimethylallyltransferase</fullName>
        <shortName evidence="1">DMAPP:tRNA dimethylallyltransferase</shortName>
        <shortName evidence="1">DMATase</shortName>
    </alternativeName>
    <alternativeName>
        <fullName evidence="1">Isopentenyl-diphosphate:tRNA isopentenyltransferase</fullName>
        <shortName evidence="1">IPP transferase</shortName>
        <shortName evidence="1">IPPT</shortName>
        <shortName evidence="1">IPTase</shortName>
    </alternativeName>
</protein>
<sequence>MTPCLLIAGPTAAGKTALSLAAAERVGGEIINADSMQVYAGLPLITAQPDAAERARAPHHLFGSIDPAIRYSVGQWTSDVLALISDIRGRGNVPILVGGTGLYFNALTRGLAPVPEIGDAARARAAALLDADGLAGLRAEALRLDPVATNRVDAADRQRLLRIVEVGFETGTALSVFQADTVPPLEPAAWRGIVIEPDREALYRRIDQRFEHMLEAGALDEVAAFMQRDLDPDLPASKALGVPPLIAHLRGEMSLDEARDNAKRDSRRYAKRQGTWFRNQAASWSRIGTLDSEAAISALADILDQPPG</sequence>
<feature type="chain" id="PRO_0000377213" description="tRNA dimethylallyltransferase">
    <location>
        <begin position="1"/>
        <end position="308"/>
    </location>
</feature>
<feature type="region of interest" description="Interaction with substrate tRNA" evidence="1">
    <location>
        <begin position="34"/>
        <end position="37"/>
    </location>
</feature>
<feature type="region of interest" description="Interaction with substrate tRNA" evidence="1">
    <location>
        <begin position="158"/>
        <end position="162"/>
    </location>
</feature>
<feature type="binding site" evidence="1">
    <location>
        <begin position="9"/>
        <end position="16"/>
    </location>
    <ligand>
        <name>ATP</name>
        <dbReference type="ChEBI" id="CHEBI:30616"/>
    </ligand>
</feature>
<feature type="binding site" evidence="1">
    <location>
        <begin position="11"/>
        <end position="16"/>
    </location>
    <ligand>
        <name>substrate</name>
    </ligand>
</feature>
<feature type="site" description="Interaction with substrate tRNA" evidence="1">
    <location>
        <position position="100"/>
    </location>
</feature>
<feature type="site" description="Interaction with substrate tRNA" evidence="1">
    <location>
        <position position="122"/>
    </location>
</feature>
<organism>
    <name type="scientific">Maricaulis maris (strain MCS10)</name>
    <name type="common">Caulobacter maris</name>
    <dbReference type="NCBI Taxonomy" id="394221"/>
    <lineage>
        <taxon>Bacteria</taxon>
        <taxon>Pseudomonadati</taxon>
        <taxon>Pseudomonadota</taxon>
        <taxon>Alphaproteobacteria</taxon>
        <taxon>Maricaulales</taxon>
        <taxon>Maricaulaceae</taxon>
        <taxon>Maricaulis</taxon>
    </lineage>
</organism>
<comment type="function">
    <text evidence="1">Catalyzes the transfer of a dimethylallyl group onto the adenine at position 37 in tRNAs that read codons beginning with uridine, leading to the formation of N6-(dimethylallyl)adenosine (i(6)A).</text>
</comment>
<comment type="catalytic activity">
    <reaction evidence="1">
        <text>adenosine(37) in tRNA + dimethylallyl diphosphate = N(6)-dimethylallyladenosine(37) in tRNA + diphosphate</text>
        <dbReference type="Rhea" id="RHEA:26482"/>
        <dbReference type="Rhea" id="RHEA-COMP:10162"/>
        <dbReference type="Rhea" id="RHEA-COMP:10375"/>
        <dbReference type="ChEBI" id="CHEBI:33019"/>
        <dbReference type="ChEBI" id="CHEBI:57623"/>
        <dbReference type="ChEBI" id="CHEBI:74411"/>
        <dbReference type="ChEBI" id="CHEBI:74415"/>
        <dbReference type="EC" id="2.5.1.75"/>
    </reaction>
</comment>
<comment type="cofactor">
    <cofactor evidence="1">
        <name>Mg(2+)</name>
        <dbReference type="ChEBI" id="CHEBI:18420"/>
    </cofactor>
</comment>
<comment type="subunit">
    <text evidence="1">Monomer.</text>
</comment>
<comment type="similarity">
    <text evidence="1">Belongs to the IPP transferase family.</text>
</comment>